<evidence type="ECO:0000250" key="1"/>
<evidence type="ECO:0000255" key="2">
    <source>
        <dbReference type="PROSITE-ProRule" id="PRU00783"/>
    </source>
</evidence>
<evidence type="ECO:0000256" key="3">
    <source>
        <dbReference type="SAM" id="MobiDB-lite"/>
    </source>
</evidence>
<evidence type="ECO:0000269" key="4">
    <source>
    </source>
</evidence>
<evidence type="ECO:0000305" key="5"/>
<evidence type="ECO:0000305" key="6">
    <source>
    </source>
</evidence>
<protein>
    <recommendedName>
        <fullName>Ceramide kinase</fullName>
        <shortName>OsCERK</shortName>
        <ecNumber>2.7.1.138</ecNumber>
    </recommendedName>
</protein>
<name>CERK_ORYSJ</name>
<proteinExistence type="evidence at protein level"/>
<keyword id="KW-0067">ATP-binding</keyword>
<keyword id="KW-0106">Calcium</keyword>
<keyword id="KW-0418">Kinase</keyword>
<keyword id="KW-0460">Magnesium</keyword>
<keyword id="KW-0479">Metal-binding</keyword>
<keyword id="KW-0547">Nucleotide-binding</keyword>
<keyword id="KW-1185">Reference proteome</keyword>
<keyword id="KW-0808">Transferase</keyword>
<sequence>MEGGGEALFLDGVGEVTVAVGDDGLSFQPLHQEVSSSCWSSIIMQPKLESKLKFSDVYAVELLEVGPVCEPWNARATVQGKINTEMNRFVIHTVTRPRKRPSPWVPCEYIFGHKDQQTCKTWVEHIKTCINKEQDRPKSLMVFVHPLCGKGRGCKNWETVAPLFERAKVKTKVIVTQRAGHAYDTLASLSDKDLKKFDGVIAVGGDGLFNEILNGLLSTRHTNSYPPTPEGFGYFRNNMKCQEHRNNDLSNSELTGDDANAISGSSNTPDDHEPLLSTTRSTGLDISSSDSSDEPCNGDQVPLVSFPNNWFRLGIIPSGSTDAIVLSTTGERDPVTSALLIILGRRISLDIAQVVRWKSSPSAEVSPTVRYAASFAGYGFYGEVIRESEKYRWMGPARYDFSGTMVFLKHRSYEAKVAFLENGNTHSLTASAENNANGVQTLQYHQNRHRKTICRTNCLICKGTSTSEQNSEDENPDSSRTACETPKWVWSKGRFLSVGAAVISCRNERAPDGLVADAHLSDGFLHLLLIRDCPLPFYLWHLTQFTKKGSDPLSFKFVEHHKTQAFTFISSHDESVWNLDGELLQACEVSVQAFRGLVNLFASGPEV</sequence>
<feature type="chain" id="PRO_0000430309" description="Ceramide kinase">
    <location>
        <begin position="1"/>
        <end position="607"/>
    </location>
</feature>
<feature type="domain" description="DAGKc" evidence="2">
    <location>
        <begin position="135"/>
        <end position="358"/>
    </location>
</feature>
<feature type="region of interest" description="Disordered" evidence="3">
    <location>
        <begin position="247"/>
        <end position="297"/>
    </location>
</feature>
<feature type="short sequence motif" description="CXXXCXXC">
    <location>
        <begin position="454"/>
        <end position="461"/>
    </location>
</feature>
<feature type="compositionally biased region" description="Polar residues" evidence="3">
    <location>
        <begin position="276"/>
        <end position="286"/>
    </location>
</feature>
<feature type="active site" description="Proton donor/acceptor" evidence="1">
    <location>
        <position position="206"/>
    </location>
</feature>
<feature type="binding site" evidence="2">
    <location>
        <begin position="145"/>
        <end position="149"/>
    </location>
    <ligand>
        <name>ATP</name>
        <dbReference type="ChEBI" id="CHEBI:30616"/>
    </ligand>
</feature>
<feature type="binding site" evidence="2">
    <location>
        <position position="176"/>
    </location>
    <ligand>
        <name>ATP</name>
        <dbReference type="ChEBI" id="CHEBI:30616"/>
    </ligand>
</feature>
<feature type="binding site" evidence="1">
    <location>
        <begin position="204"/>
        <end position="207"/>
    </location>
    <ligand>
        <name>substrate</name>
    </ligand>
</feature>
<feature type="binding site" evidence="2">
    <location>
        <begin position="205"/>
        <end position="211"/>
    </location>
    <ligand>
        <name>ATP</name>
        <dbReference type="ChEBI" id="CHEBI:30616"/>
    </ligand>
</feature>
<feature type="binding site" evidence="2">
    <location>
        <position position="320"/>
    </location>
    <ligand>
        <name>ATP</name>
        <dbReference type="ChEBI" id="CHEBI:30616"/>
    </ligand>
</feature>
<feature type="mutagenesis site" description="26% reduction of activity." evidence="4">
    <original>C</original>
    <variation>A</variation>
    <location>
        <position position="454"/>
    </location>
</feature>
<feature type="mutagenesis site" description="36% reduction of activity." evidence="4">
    <original>C</original>
    <variation>A</variation>
    <location>
        <position position="458"/>
    </location>
</feature>
<feature type="mutagenesis site" description="75% reduction of activity." evidence="4">
    <original>C</original>
    <variation>A</variation>
    <location>
        <position position="461"/>
    </location>
</feature>
<organism>
    <name type="scientific">Oryza sativa subsp. japonica</name>
    <name type="common">Rice</name>
    <dbReference type="NCBI Taxonomy" id="39947"/>
    <lineage>
        <taxon>Eukaryota</taxon>
        <taxon>Viridiplantae</taxon>
        <taxon>Streptophyta</taxon>
        <taxon>Embryophyta</taxon>
        <taxon>Tracheophyta</taxon>
        <taxon>Spermatophyta</taxon>
        <taxon>Magnoliopsida</taxon>
        <taxon>Liliopsida</taxon>
        <taxon>Poales</taxon>
        <taxon>Poaceae</taxon>
        <taxon>BOP clade</taxon>
        <taxon>Oryzoideae</taxon>
        <taxon>Oryzeae</taxon>
        <taxon>Oryzinae</taxon>
        <taxon>Oryza</taxon>
        <taxon>Oryza sativa</taxon>
    </lineage>
</organism>
<reference key="1">
    <citation type="journal article" date="2011" name="PLoS ONE">
        <title>A conserved cysteine motif is critical for rice ceramide kinase activity and function.</title>
        <authorList>
            <person name="Bi F.C."/>
            <person name="Zhang Q.F."/>
            <person name="Liu Z."/>
            <person name="Fang C."/>
            <person name="Li J."/>
            <person name="Su J.B."/>
            <person name="Greenberg J.T."/>
            <person name="Wang H.B."/>
            <person name="Yao N."/>
        </authorList>
    </citation>
    <scope>NUCLEOTIDE SEQUENCE [MRNA]</scope>
    <scope>FUNCTION</scope>
    <scope>CATALYTIC ACTIVITY</scope>
    <scope>COFACTOR</scope>
    <scope>BIOPHYSICOCHEMICAL PROPERTIES</scope>
    <scope>TISSUE SPECIFICITY</scope>
    <scope>MUTAGENESIS OF CYS-454; CYS-458 AND CYS-461</scope>
    <source>
        <strain>cv. Nipponbare</strain>
    </source>
</reference>
<reference key="2">
    <citation type="journal article" date="2005" name="Nature">
        <title>The map-based sequence of the rice genome.</title>
        <authorList>
            <consortium name="International rice genome sequencing project (IRGSP)"/>
        </authorList>
    </citation>
    <scope>NUCLEOTIDE SEQUENCE [LARGE SCALE GENOMIC DNA]</scope>
    <source>
        <strain>cv. Nipponbare</strain>
    </source>
</reference>
<reference key="3">
    <citation type="journal article" date="2008" name="Nucleic Acids Res.">
        <title>The rice annotation project database (RAP-DB): 2008 update.</title>
        <authorList>
            <consortium name="The rice annotation project (RAP)"/>
        </authorList>
    </citation>
    <scope>GENOME REANNOTATION</scope>
    <source>
        <strain>cv. Nipponbare</strain>
    </source>
</reference>
<reference key="4">
    <citation type="journal article" date="2013" name="Rice">
        <title>Improvement of the Oryza sativa Nipponbare reference genome using next generation sequence and optical map data.</title>
        <authorList>
            <person name="Kawahara Y."/>
            <person name="de la Bastide M."/>
            <person name="Hamilton J.P."/>
            <person name="Kanamori H."/>
            <person name="McCombie W.R."/>
            <person name="Ouyang S."/>
            <person name="Schwartz D.C."/>
            <person name="Tanaka T."/>
            <person name="Wu J."/>
            <person name="Zhou S."/>
            <person name="Childs K.L."/>
            <person name="Davidson R.M."/>
            <person name="Lin H."/>
            <person name="Quesada-Ocampo L."/>
            <person name="Vaillancourt B."/>
            <person name="Sakai H."/>
            <person name="Lee S.S."/>
            <person name="Kim J."/>
            <person name="Numa H."/>
            <person name="Itoh T."/>
            <person name="Buell C.R."/>
            <person name="Matsumoto T."/>
        </authorList>
    </citation>
    <scope>GENOME REANNOTATION</scope>
    <source>
        <strain>cv. Nipponbare</strain>
    </source>
</reference>
<accession>C0LT23</accession>
<accession>Q0DZ01</accession>
<accession>Q6H6H1</accession>
<comment type="function">
    <text evidence="4">Catalyzes specifically the phosphorylation of ceramide to form ceramide 1-phosphate. Possesses activity on ceramide analog (C6 synthetic ceramide) in vitro. Ceramide is a critical sphingolipid metabolite that induces programmed cell death (PCD) in plants and ceramide-1-phosphate has a PCD suppressive effect. Thus, ceramide phosphorylation plays a role in the modulation of PCD and CERK activity is crucial for the maintenance of cell viability.</text>
</comment>
<comment type="catalytic activity">
    <reaction evidence="4">
        <text>an N-acylsphing-4-enine + ATP = an N-acylsphing-4-enine 1-phosphate + ADP + H(+)</text>
        <dbReference type="Rhea" id="RHEA:17929"/>
        <dbReference type="ChEBI" id="CHEBI:15378"/>
        <dbReference type="ChEBI" id="CHEBI:30616"/>
        <dbReference type="ChEBI" id="CHEBI:52639"/>
        <dbReference type="ChEBI" id="CHEBI:57674"/>
        <dbReference type="ChEBI" id="CHEBI:456216"/>
        <dbReference type="EC" id="2.7.1.138"/>
    </reaction>
</comment>
<comment type="cofactor">
    <cofactor evidence="4">
        <name>Ca(2+)</name>
        <dbReference type="ChEBI" id="CHEBI:29108"/>
    </cofactor>
</comment>
<comment type="cofactor">
    <cofactor evidence="4">
        <name>Mg(2+)</name>
        <dbReference type="ChEBI" id="CHEBI:18420"/>
    </cofactor>
</comment>
<comment type="biophysicochemical properties">
    <kinetics>
        <KM evidence="4">4.1 uM for C6 ceramide</KM>
        <KM evidence="4">36.4 uM for ATP</KM>
        <Vmax evidence="4">4.7 nmol/min/mg enzyme toward C6 ceramide</Vmax>
        <Vmax evidence="4">2.6 nmol/min/mg enzyme toward ATP</Vmax>
    </kinetics>
    <phDependence>
        <text evidence="4">Optimum pH is 7.0 (at 40 degrees Celsius).</text>
    </phDependence>
    <temperatureDependence>
        <text evidence="4">Optimum temperature is 40 degrees Celsius.</text>
    </temperatureDependence>
</comment>
<comment type="tissue specificity">
    <text evidence="4">Highly expressed in leaves and at lower levels in stems.</text>
</comment>
<comment type="miscellaneous">
    <text evidence="6">Overexpression of CERK in the Arabidopsis mutant acd5 restores wild-type phenotype.</text>
</comment>
<comment type="sequence caution" evidence="5">
    <conflict type="erroneous gene model prediction">
        <sequence resource="EMBL-CDS" id="BAD25337"/>
    </conflict>
</comment>
<comment type="sequence caution" evidence="5">
    <conflict type="erroneous gene model prediction">
        <sequence resource="EMBL-CDS" id="BAD25678"/>
    </conflict>
</comment>
<comment type="sequence caution" evidence="5">
    <conflict type="erroneous gene model prediction">
        <sequence resource="EMBL-CDS" id="BAF09537"/>
    </conflict>
</comment>
<dbReference type="EC" id="2.7.1.138"/>
<dbReference type="EMBL" id="FJ765452">
    <property type="protein sequence ID" value="ACN66286.1"/>
    <property type="molecule type" value="mRNA"/>
</dbReference>
<dbReference type="EMBL" id="AP004676">
    <property type="protein sequence ID" value="BAD25337.1"/>
    <property type="status" value="ALT_SEQ"/>
    <property type="molecule type" value="Genomic_DNA"/>
</dbReference>
<dbReference type="EMBL" id="AP005006">
    <property type="protein sequence ID" value="BAD25678.1"/>
    <property type="status" value="ALT_SEQ"/>
    <property type="molecule type" value="Genomic_DNA"/>
</dbReference>
<dbReference type="EMBL" id="AP008208">
    <property type="protein sequence ID" value="BAF09537.2"/>
    <property type="status" value="ALT_SEQ"/>
    <property type="molecule type" value="Genomic_DNA"/>
</dbReference>
<dbReference type="EMBL" id="AP014958">
    <property type="status" value="NOT_ANNOTATED_CDS"/>
    <property type="molecule type" value="Genomic_DNA"/>
</dbReference>
<dbReference type="RefSeq" id="XP_015627473.1">
    <property type="nucleotide sequence ID" value="XM_015771987.1"/>
</dbReference>
<dbReference type="SMR" id="C0LT23"/>
<dbReference type="FunCoup" id="C0LT23">
    <property type="interactions" value="1558"/>
</dbReference>
<dbReference type="STRING" id="39947.C0LT23"/>
<dbReference type="PaxDb" id="39947-C0LT23"/>
<dbReference type="KEGG" id="dosa:Os02g0656200"/>
<dbReference type="eggNOG" id="KOG1115">
    <property type="taxonomic scope" value="Eukaryota"/>
</dbReference>
<dbReference type="HOGENOM" id="CLU_013399_2_2_1"/>
<dbReference type="InParanoid" id="C0LT23"/>
<dbReference type="OrthoDB" id="530923at2759"/>
<dbReference type="PlantReactome" id="R-OSA-1119325">
    <property type="pathway name" value="Sphingolipid metabolism"/>
</dbReference>
<dbReference type="Proteomes" id="UP000000763">
    <property type="component" value="Chromosome 2"/>
</dbReference>
<dbReference type="Proteomes" id="UP000059680">
    <property type="component" value="Chromosome 2"/>
</dbReference>
<dbReference type="GO" id="GO:0016020">
    <property type="term" value="C:membrane"/>
    <property type="evidence" value="ECO:0007669"/>
    <property type="project" value="GOC"/>
</dbReference>
<dbReference type="GO" id="GO:0005524">
    <property type="term" value="F:ATP binding"/>
    <property type="evidence" value="ECO:0007669"/>
    <property type="project" value="UniProtKB-KW"/>
</dbReference>
<dbReference type="GO" id="GO:0001729">
    <property type="term" value="F:ceramide kinase activity"/>
    <property type="evidence" value="ECO:0000314"/>
    <property type="project" value="UniProtKB"/>
</dbReference>
<dbReference type="GO" id="GO:0046872">
    <property type="term" value="F:metal ion binding"/>
    <property type="evidence" value="ECO:0007669"/>
    <property type="project" value="UniProtKB-KW"/>
</dbReference>
<dbReference type="GO" id="GO:0006672">
    <property type="term" value="P:ceramide metabolic process"/>
    <property type="evidence" value="ECO:0000314"/>
    <property type="project" value="UniProtKB"/>
</dbReference>
<dbReference type="GO" id="GO:0043069">
    <property type="term" value="P:negative regulation of programmed cell death"/>
    <property type="evidence" value="ECO:0000314"/>
    <property type="project" value="UniProtKB"/>
</dbReference>
<dbReference type="FunFam" id="2.60.200.40:FF:000014">
    <property type="entry name" value="Ceramide kinase"/>
    <property type="match status" value="1"/>
</dbReference>
<dbReference type="Gene3D" id="2.60.200.40">
    <property type="match status" value="1"/>
</dbReference>
<dbReference type="Gene3D" id="3.40.50.10330">
    <property type="entry name" value="Probable inorganic polyphosphate/atp-NAD kinase, domain 1"/>
    <property type="match status" value="1"/>
</dbReference>
<dbReference type="InterPro" id="IPR017438">
    <property type="entry name" value="ATP-NAD_kinase_N"/>
</dbReference>
<dbReference type="InterPro" id="IPR045363">
    <property type="entry name" value="CERK_C"/>
</dbReference>
<dbReference type="InterPro" id="IPR001206">
    <property type="entry name" value="Diacylglycerol_kinase_cat_dom"/>
</dbReference>
<dbReference type="InterPro" id="IPR050187">
    <property type="entry name" value="Lipid_Phosphate_FormReg"/>
</dbReference>
<dbReference type="InterPro" id="IPR016064">
    <property type="entry name" value="NAD/diacylglycerol_kinase_sf"/>
</dbReference>
<dbReference type="PANTHER" id="PTHR12358:SF6">
    <property type="entry name" value="CERAMIDE KINASE"/>
    <property type="match status" value="1"/>
</dbReference>
<dbReference type="PANTHER" id="PTHR12358">
    <property type="entry name" value="SPHINGOSINE KINASE"/>
    <property type="match status" value="1"/>
</dbReference>
<dbReference type="Pfam" id="PF19280">
    <property type="entry name" value="CERK_C"/>
    <property type="match status" value="1"/>
</dbReference>
<dbReference type="Pfam" id="PF00781">
    <property type="entry name" value="DAGK_cat"/>
    <property type="match status" value="1"/>
</dbReference>
<dbReference type="SUPFAM" id="SSF111331">
    <property type="entry name" value="NAD kinase/diacylglycerol kinase-like"/>
    <property type="match status" value="2"/>
</dbReference>
<dbReference type="PROSITE" id="PS50146">
    <property type="entry name" value="DAGK"/>
    <property type="match status" value="1"/>
</dbReference>
<gene>
    <name type="primary">CERK</name>
    <name type="ordered locus">Os02g0656200</name>
    <name type="ordered locus">LOC_Os02g43906/LOC_Os02g43912</name>
    <name type="ORF">OJ1003_B06.39</name>
    <name type="ORF">P0519E06.23</name>
</gene>